<gene>
    <name evidence="1" type="primary">dnaK</name>
    <name type="ordered locus">HNE_3321</name>
</gene>
<dbReference type="EMBL" id="CP000158">
    <property type="protein sequence ID" value="ABI76618.1"/>
    <property type="molecule type" value="Genomic_DNA"/>
</dbReference>
<dbReference type="RefSeq" id="WP_011648289.1">
    <property type="nucleotide sequence ID" value="NC_008358.1"/>
</dbReference>
<dbReference type="SMR" id="Q0BWZ9"/>
<dbReference type="STRING" id="228405.HNE_3321"/>
<dbReference type="KEGG" id="hne:HNE_3321"/>
<dbReference type="eggNOG" id="COG0443">
    <property type="taxonomic scope" value="Bacteria"/>
</dbReference>
<dbReference type="HOGENOM" id="CLU_005965_2_3_5"/>
<dbReference type="Proteomes" id="UP000001959">
    <property type="component" value="Chromosome"/>
</dbReference>
<dbReference type="GO" id="GO:0005524">
    <property type="term" value="F:ATP binding"/>
    <property type="evidence" value="ECO:0007669"/>
    <property type="project" value="UniProtKB-UniRule"/>
</dbReference>
<dbReference type="GO" id="GO:0140662">
    <property type="term" value="F:ATP-dependent protein folding chaperone"/>
    <property type="evidence" value="ECO:0007669"/>
    <property type="project" value="InterPro"/>
</dbReference>
<dbReference type="GO" id="GO:0051082">
    <property type="term" value="F:unfolded protein binding"/>
    <property type="evidence" value="ECO:0007669"/>
    <property type="project" value="InterPro"/>
</dbReference>
<dbReference type="CDD" id="cd10234">
    <property type="entry name" value="ASKHA_NBD_HSP70_DnaK-like"/>
    <property type="match status" value="1"/>
</dbReference>
<dbReference type="FunFam" id="2.60.34.10:FF:000014">
    <property type="entry name" value="Chaperone protein DnaK HSP70"/>
    <property type="match status" value="1"/>
</dbReference>
<dbReference type="FunFam" id="1.20.1270.10:FF:000001">
    <property type="entry name" value="Molecular chaperone DnaK"/>
    <property type="match status" value="1"/>
</dbReference>
<dbReference type="FunFam" id="3.30.420.40:FF:000004">
    <property type="entry name" value="Molecular chaperone DnaK"/>
    <property type="match status" value="1"/>
</dbReference>
<dbReference type="FunFam" id="3.90.640.10:FF:000003">
    <property type="entry name" value="Molecular chaperone DnaK"/>
    <property type="match status" value="1"/>
</dbReference>
<dbReference type="Gene3D" id="1.20.1270.10">
    <property type="match status" value="1"/>
</dbReference>
<dbReference type="Gene3D" id="3.30.420.40">
    <property type="match status" value="2"/>
</dbReference>
<dbReference type="Gene3D" id="3.90.640.10">
    <property type="entry name" value="Actin, Chain A, domain 4"/>
    <property type="match status" value="1"/>
</dbReference>
<dbReference type="Gene3D" id="2.60.34.10">
    <property type="entry name" value="Substrate Binding Domain Of DNAk, Chain A, domain 1"/>
    <property type="match status" value="1"/>
</dbReference>
<dbReference type="HAMAP" id="MF_00332">
    <property type="entry name" value="DnaK"/>
    <property type="match status" value="1"/>
</dbReference>
<dbReference type="InterPro" id="IPR043129">
    <property type="entry name" value="ATPase_NBD"/>
</dbReference>
<dbReference type="InterPro" id="IPR012725">
    <property type="entry name" value="Chaperone_DnaK"/>
</dbReference>
<dbReference type="InterPro" id="IPR018181">
    <property type="entry name" value="Heat_shock_70_CS"/>
</dbReference>
<dbReference type="InterPro" id="IPR029048">
    <property type="entry name" value="HSP70_C_sf"/>
</dbReference>
<dbReference type="InterPro" id="IPR029047">
    <property type="entry name" value="HSP70_peptide-bd_sf"/>
</dbReference>
<dbReference type="InterPro" id="IPR013126">
    <property type="entry name" value="Hsp_70_fam"/>
</dbReference>
<dbReference type="NCBIfam" id="NF001413">
    <property type="entry name" value="PRK00290.1"/>
    <property type="match status" value="1"/>
</dbReference>
<dbReference type="NCBIfam" id="NF003520">
    <property type="entry name" value="PRK05183.1"/>
    <property type="match status" value="1"/>
</dbReference>
<dbReference type="NCBIfam" id="TIGR02350">
    <property type="entry name" value="prok_dnaK"/>
    <property type="match status" value="1"/>
</dbReference>
<dbReference type="PANTHER" id="PTHR19375">
    <property type="entry name" value="HEAT SHOCK PROTEIN 70KDA"/>
    <property type="match status" value="1"/>
</dbReference>
<dbReference type="Pfam" id="PF00012">
    <property type="entry name" value="HSP70"/>
    <property type="match status" value="1"/>
</dbReference>
<dbReference type="PRINTS" id="PR00301">
    <property type="entry name" value="HEATSHOCK70"/>
</dbReference>
<dbReference type="SUPFAM" id="SSF53067">
    <property type="entry name" value="Actin-like ATPase domain"/>
    <property type="match status" value="2"/>
</dbReference>
<dbReference type="SUPFAM" id="SSF100934">
    <property type="entry name" value="Heat shock protein 70kD (HSP70), C-terminal subdomain"/>
    <property type="match status" value="1"/>
</dbReference>
<dbReference type="SUPFAM" id="SSF100920">
    <property type="entry name" value="Heat shock protein 70kD (HSP70), peptide-binding domain"/>
    <property type="match status" value="1"/>
</dbReference>
<dbReference type="PROSITE" id="PS00297">
    <property type="entry name" value="HSP70_1"/>
    <property type="match status" value="1"/>
</dbReference>
<dbReference type="PROSITE" id="PS00329">
    <property type="entry name" value="HSP70_2"/>
    <property type="match status" value="1"/>
</dbReference>
<dbReference type="PROSITE" id="PS01036">
    <property type="entry name" value="HSP70_3"/>
    <property type="match status" value="1"/>
</dbReference>
<proteinExistence type="inferred from homology"/>
<organism>
    <name type="scientific">Hyphomonas neptunium (strain ATCC 15444)</name>
    <dbReference type="NCBI Taxonomy" id="228405"/>
    <lineage>
        <taxon>Bacteria</taxon>
        <taxon>Pseudomonadati</taxon>
        <taxon>Pseudomonadota</taxon>
        <taxon>Alphaproteobacteria</taxon>
        <taxon>Hyphomonadales</taxon>
        <taxon>Hyphomonadaceae</taxon>
        <taxon>Hyphomonas</taxon>
    </lineage>
</organism>
<keyword id="KW-0067">ATP-binding</keyword>
<keyword id="KW-0143">Chaperone</keyword>
<keyword id="KW-0547">Nucleotide-binding</keyword>
<keyword id="KW-0597">Phosphoprotein</keyword>
<keyword id="KW-1185">Reference proteome</keyword>
<keyword id="KW-0346">Stress response</keyword>
<reference key="1">
    <citation type="journal article" date="2006" name="J. Bacteriol.">
        <title>Comparative genomic evidence for a close relationship between the dimorphic prosthecate bacteria Hyphomonas neptunium and Caulobacter crescentus.</title>
        <authorList>
            <person name="Badger J.H."/>
            <person name="Hoover T.R."/>
            <person name="Brun Y.V."/>
            <person name="Weiner R.M."/>
            <person name="Laub M.T."/>
            <person name="Alexandre G."/>
            <person name="Mrazek J."/>
            <person name="Ren Q."/>
            <person name="Paulsen I.T."/>
            <person name="Nelson K.E."/>
            <person name="Khouri H.M."/>
            <person name="Radune D."/>
            <person name="Sosa J."/>
            <person name="Dodson R.J."/>
            <person name="Sullivan S.A."/>
            <person name="Rosovitz M.J."/>
            <person name="Madupu R."/>
            <person name="Brinkac L.M."/>
            <person name="Durkin A.S."/>
            <person name="Daugherty S.C."/>
            <person name="Kothari S.P."/>
            <person name="Giglio M.G."/>
            <person name="Zhou L."/>
            <person name="Haft D.H."/>
            <person name="Selengut J.D."/>
            <person name="Davidsen T.M."/>
            <person name="Yang Q."/>
            <person name="Zafar N."/>
            <person name="Ward N.L."/>
        </authorList>
    </citation>
    <scope>NUCLEOTIDE SEQUENCE [LARGE SCALE GENOMIC DNA]</scope>
    <source>
        <strain>ATCC 15444</strain>
    </source>
</reference>
<feature type="chain" id="PRO_1000059580" description="Chaperone protein DnaK">
    <location>
        <begin position="1"/>
        <end position="631"/>
    </location>
</feature>
<feature type="region of interest" description="Disordered" evidence="2">
    <location>
        <begin position="603"/>
        <end position="631"/>
    </location>
</feature>
<feature type="compositionally biased region" description="Acidic residues" evidence="2">
    <location>
        <begin position="618"/>
        <end position="631"/>
    </location>
</feature>
<feature type="modified residue" description="Phosphothreonine; by autocatalysis" evidence="1">
    <location>
        <position position="198"/>
    </location>
</feature>
<name>DNAK_HYPNA</name>
<evidence type="ECO:0000255" key="1">
    <source>
        <dbReference type="HAMAP-Rule" id="MF_00332"/>
    </source>
</evidence>
<evidence type="ECO:0000256" key="2">
    <source>
        <dbReference type="SAM" id="MobiDB-lite"/>
    </source>
</evidence>
<protein>
    <recommendedName>
        <fullName evidence="1">Chaperone protein DnaK</fullName>
    </recommendedName>
    <alternativeName>
        <fullName evidence="1">HSP70</fullName>
    </alternativeName>
    <alternativeName>
        <fullName evidence="1">Heat shock 70 kDa protein</fullName>
    </alternativeName>
    <alternativeName>
        <fullName evidence="1">Heat shock protein 70</fullName>
    </alternativeName>
</protein>
<comment type="function">
    <text evidence="1">Acts as a chaperone.</text>
</comment>
<comment type="induction">
    <text evidence="1">By stress conditions e.g. heat shock.</text>
</comment>
<comment type="similarity">
    <text evidence="1">Belongs to the heat shock protein 70 family.</text>
</comment>
<sequence>MSKIIGIDLGTTNSCVAVMEGGQAKVIENAEGARTTPSVVAFTENGDRLIGQPARRQGVTNPDFTFYAIKRLIGRTFDDPTAQKDKAMSPFSIVKAPNGDAWVKGRDKDYSPQEISAFILTKMKETAEAYLGSKVTQAVITVPAYFNDAQRQATKDAGRIAGLEVLRIINEPTAAALAYGLDKGGNKTIAVYDLGGGTFDVSLLEIGDGVFEVLSTNGDTFLGGEDFDLRVVDFLASEFKKEQGIDLKGDKLALQRLKEEAEKAKKELSSATQYEVNLPFITADATGPKHLNIKLTRAKFESLVEDLVKRTIDPCQKALKDAGKTPAQIDEVVLVGGMTRMPAVQEAVKKFFNREPHKGVNPDEVVAIGAAIQGGVLQGDVKDVVLLDVTPLSLGIETLGGIFTRLIERNTTIPTKKSQVFSTAEDNQPAVTIKVAQGEREMASDNKQLGQFNLEGIAPAPRGLPQIEVTFDIDANGIVSVSAKDKATGKEQQITIQADGGLSEADIKNMMADAESNASTDKARRELVEAKNHAEALIHQTEKQLIEHGAKVTDAIKGDIEKAIADLKEAAAGDNAADIAAKHQALMNAAMKLGEAIYAAQGADAGEGEDAPQSGNDDVVDADFEEVDERK</sequence>
<accession>Q0BWZ9</accession>